<sequence length="2208" mass="250981">MDEKISSLKDFVRKQIPDRPEFFYQKEALLSQVEVSLILTEGFKLMSCLVEVESCEKNSCVHNSEQKFVDTILAENGIVGPTLPKVMPDGYRYFNKTLLLLEVFVRVRPDEFEKKWKSDMGKLLSLKDDLLRCGISLVPIVDGRCSYNTSIIPEWATERFRWLLIELLKESKEAMDFEIEDQEYQRLIHSLSRTCNQSLGFENIEQLKKVHLNYEDRLNEVILAGLNSDLKESVIREELIKLKAWYKKEVFEKGHGNFVRTNQTSLLKTLQEIGSHAGTTVPECPMCCSKVFDLCYQMMLKIEGKESLNSSVSSDNNNPQISLVGREYLYVLSVCNKIKGKKIFNTRRNTLLFLDLIILNFVTEVFKKVPLGIQSLKVEGLIIGQMLLLTNDRALDILSARRLLIKKIECNESWVKKCGDTLRRVEPSFWTSVCNYVKLPDFESLLLLAEVLCSDAPLLRYEPVQVEESHCTHKDFQLLNINQQDCLFECLSHISLSLINSMKTSFSSRLLINEKDYKRYFGTVRLKECYVQRFLFTEGKCGFLFYQKTGERSRCFSIYLSENGQLTELGSFYADPKRYFLPIFSGCVLRSMCSEMITWLDFDEELMHVVKPQLRSLVLSILCSPTKRAQNFLQGLRYFIMAFVNQAHHKQLMSKLIVECKSASDVLIQRLATKVFYTILTFGEDPGIHMTRKFKFLLNVSYLCHLITKETPDRLTDQIKCFEKFLEPKLEFGSVVVNPSLNGILDPKQEDNMLNGLEKLFSKSLYDVEDLKRPGISKDVLNYCLSLFTRGKLKVTGVLKTDPFKPSFTSTALDLSSNKSVVVPKLDELGNIVSVYDKQKLISSCVASMAERFRTKGRFNLDPDTIDFLIMKNLTNLLSISGESPKASEELSLLYENLPEEITQVYDEIKNDIQVTLGKIGAKGSYKQKNGKEGKAGSPSNAETLESIWAPFGVLREIKIETSTHEIKDFDPGLLSMDIYEKLCTTVFESSLKSSFFIDEVLSICPLELLLKNLTTKSFKENDFFECFKYILIQAGYDQRLGTYEHRSRARFGFREEVVRLRDDVRVSDRESNSEAIAKRLDRSFFTSAALRNLCFYSEESPTEYTCVSSNTGNMKFGLSYKEQVGSNRELYVGDLNTKMMTRLVEDFAEAVCNSMHYTCLNSESEFDRAICDMKMAVNNGDLCLSMDHSKWGPFMSPALFHRFLSGAKLKTMRLGDSVDTKPVLNVLKWHIHKVVEVPYNVAEAYCTGMLKRRLGLMSLQTQSISEAFFHQEIQTKKEVPSHIMSVLDMGQGILHNLSDLYGLISEQFLNYCLDFLYDAIPTSYTSSDDQITMIRMPQQSMETAEEGNADWLELLCFHDFLSSKLNKFVSPKTVCGTFAAEFKSRFFVMGEETPLLTKFVSAALHNVKCKTPSQLAETIDTICDQCVANGVGVSIVSEISKRVNRLIKYSGYPLNPFLAVENQDVKDWVDGSRGYRLQRNIESCSIQESVLKQVRKFAKDVFLKIKRGQVFEEHLIQLIGADGDSAMEGFLSYVDCDKDKLREILEHRWLNLSANGDLRLVLRTKLMSSKRVLEKEQIPTLVKTLQSKLSKSFTKGAKKILAESINKSAFQASVASGFIGFCESVGSKCVRDGSGGFLYIREVVSKIISCQCTLCSANPGIIFCKNALSNVSNFSRPILWDYFSLVLTNACELGEWVFSPTKRPQQPNLLQNPNLFWAVKPKSVRLIEDQLGLGHVLQSIRRSYPKIFEEHLIPFMSDLQVNRTIDFTRLKYLDVCVAIDMMNENLGIVSHLLKRKDNSVYIVKQNECSVAHVREVQYVDHDIGLSPQQVCTNFKLQLVLSSMISPLVISTSVLKSFFWYNEVLKLEDNSLIDIGELTDFVILNKSYGVERVMYLEDMAMGYVVSSVDEPEIHLINAWVLTEHDVKKLESGSKVGDKDGKALAITLNIQFRHRRHSTKYHFTKGVVYSFTVEFQVPPSLQGPNLNTVPVREMVLNASGMLGDHQSLDGVPLVASHPLMTGKKPIDLLTLLSESDIQISDDTGQLMAVYLDFSEFQSLIEDKYSFKIVGPERLDTPIILKGGVYMSEGKRLSTLMVELSGNVIVKALGAIETDKEVGSLLLGLWPYIKTTGQKIKMDQNDFLLLYESHRELLLKSLEGLGGWLDFLDFSVCFSKSLSDLVISDNTGSLRLKGVTCRPIHNPRIVEDID</sequence>
<name>L_CPXVB</name>
<dbReference type="EC" id="2.7.7.48" evidence="1"/>
<dbReference type="EC" id="3.1.-.-" evidence="1"/>
<dbReference type="EMBL" id="AY216519">
    <property type="protein sequence ID" value="AAP44555.2"/>
    <property type="molecule type" value="Genomic_RNA"/>
</dbReference>
<dbReference type="RefSeq" id="YP_001649218.1">
    <property type="nucleotide sequence ID" value="NC_010252.1"/>
</dbReference>
<dbReference type="SMR" id="Q6XQH2"/>
<dbReference type="KEGG" id="vg:5848386"/>
<dbReference type="Proteomes" id="UP000008164">
    <property type="component" value="Genome"/>
</dbReference>
<dbReference type="GO" id="GO:0030430">
    <property type="term" value="C:host cell cytoplasm"/>
    <property type="evidence" value="ECO:0007669"/>
    <property type="project" value="UniProtKB-SubCell"/>
</dbReference>
<dbReference type="GO" id="GO:0044423">
    <property type="term" value="C:virion component"/>
    <property type="evidence" value="ECO:0007669"/>
    <property type="project" value="UniProtKB-KW"/>
</dbReference>
<dbReference type="GO" id="GO:0016787">
    <property type="term" value="F:hydrolase activity"/>
    <property type="evidence" value="ECO:0007669"/>
    <property type="project" value="UniProtKB-KW"/>
</dbReference>
<dbReference type="GO" id="GO:0046872">
    <property type="term" value="F:metal ion binding"/>
    <property type="evidence" value="ECO:0007669"/>
    <property type="project" value="UniProtKB-KW"/>
</dbReference>
<dbReference type="GO" id="GO:0000166">
    <property type="term" value="F:nucleotide binding"/>
    <property type="evidence" value="ECO:0007669"/>
    <property type="project" value="UniProtKB-UniRule"/>
</dbReference>
<dbReference type="GO" id="GO:0003968">
    <property type="term" value="F:RNA-directed RNA polymerase activity"/>
    <property type="evidence" value="ECO:0007669"/>
    <property type="project" value="UniProtKB-UniRule"/>
</dbReference>
<dbReference type="GO" id="GO:0075526">
    <property type="term" value="P:cap snatching"/>
    <property type="evidence" value="ECO:0007669"/>
    <property type="project" value="UniProtKB-UniRule"/>
</dbReference>
<dbReference type="GO" id="GO:0039689">
    <property type="term" value="P:negative stranded viral RNA replication"/>
    <property type="evidence" value="ECO:0000250"/>
    <property type="project" value="UniProtKB"/>
</dbReference>
<dbReference type="GO" id="GO:0039696">
    <property type="term" value="P:RNA-templated viral transcription"/>
    <property type="evidence" value="ECO:0000250"/>
    <property type="project" value="UniProtKB"/>
</dbReference>
<dbReference type="Gene3D" id="3.30.70.2640">
    <property type="entry name" value="Arenavirus RNA polymerase"/>
    <property type="match status" value="1"/>
</dbReference>
<dbReference type="Gene3D" id="1.20.1440.300">
    <property type="entry name" value="RNA-directed RNA polymerase L, helical domain"/>
    <property type="match status" value="1"/>
</dbReference>
<dbReference type="HAMAP" id="MF_04086">
    <property type="entry name" value="ARENA_L"/>
    <property type="match status" value="1"/>
</dbReference>
<dbReference type="InterPro" id="IPR026382">
    <property type="entry name" value="CapSnatch_arenavir"/>
</dbReference>
<dbReference type="InterPro" id="IPR048006">
    <property type="entry name" value="CapSnatch_bunyavir"/>
</dbReference>
<dbReference type="InterPro" id="IPR007099">
    <property type="entry name" value="RNA-dir_pol_NSvirus"/>
</dbReference>
<dbReference type="InterPro" id="IPR010453">
    <property type="entry name" value="RNA_pol_arenavir"/>
</dbReference>
<dbReference type="NCBIfam" id="TIGR04202">
    <property type="entry name" value="capSnatchArena"/>
    <property type="match status" value="1"/>
</dbReference>
<dbReference type="Pfam" id="PF06317">
    <property type="entry name" value="Arena_RNA_pol"/>
    <property type="match status" value="1"/>
</dbReference>
<dbReference type="Pfam" id="PF17296">
    <property type="entry name" value="ArenaCapSnatch"/>
    <property type="match status" value="1"/>
</dbReference>
<dbReference type="PIRSF" id="PIRSF000836">
    <property type="entry name" value="L_ArenaV"/>
    <property type="match status" value="1"/>
</dbReference>
<dbReference type="PROSITE" id="PS50525">
    <property type="entry name" value="RDRP_SSRNA_NEG_SEG"/>
    <property type="match status" value="1"/>
</dbReference>
<organismHost>
    <name type="scientific">Hylaeamys megacephalus</name>
    <name type="common">Large-headed rice rat</name>
    <name type="synonym">Oryzomys megacephalus</name>
    <dbReference type="NCBI Taxonomy" id="89099"/>
</organismHost>
<feature type="chain" id="PRO_0000361635" description="RNA-directed RNA polymerase L">
    <location>
        <begin position="1"/>
        <end position="2208"/>
    </location>
</feature>
<feature type="domain" description="RdRp catalytic" evidence="1">
    <location>
        <begin position="1172"/>
        <end position="1370"/>
    </location>
</feature>
<feature type="region of interest" description="Endonuclease" evidence="1">
    <location>
        <begin position="26"/>
        <end position="284"/>
    </location>
</feature>
<feature type="active site" evidence="1">
    <location>
        <position position="115"/>
    </location>
</feature>
<feature type="binding site" evidence="1">
    <location>
        <position position="51"/>
    </location>
    <ligand>
        <name>Mn(2+)</name>
        <dbReference type="ChEBI" id="CHEBI:29035"/>
        <label>1</label>
    </ligand>
</feature>
<feature type="binding site" evidence="1">
    <location>
        <position position="89"/>
    </location>
    <ligand>
        <name>Mn(2+)</name>
        <dbReference type="ChEBI" id="CHEBI:29035"/>
        <label>1</label>
    </ligand>
</feature>
<feature type="binding site" evidence="1">
    <location>
        <position position="89"/>
    </location>
    <ligand>
        <name>Mn(2+)</name>
        <dbReference type="ChEBI" id="CHEBI:29035"/>
        <label>2</label>
    </ligand>
</feature>
<feature type="binding site" evidence="1">
    <location>
        <position position="102"/>
    </location>
    <ligand>
        <name>Mn(2+)</name>
        <dbReference type="ChEBI" id="CHEBI:29035"/>
        <label>1</label>
    </ligand>
</feature>
<feature type="binding site" evidence="1">
    <location>
        <position position="1330"/>
    </location>
    <ligand>
        <name>Mg(2+)</name>
        <dbReference type="ChEBI" id="CHEBI:18420"/>
        <note>catalytic; for RdRp activity</note>
    </ligand>
</feature>
<keyword id="KW-1157">Cap snatching</keyword>
<keyword id="KW-1035">Host cytoplasm</keyword>
<keyword id="KW-0378">Hydrolase</keyword>
<keyword id="KW-0460">Magnesium</keyword>
<keyword id="KW-0464">Manganese</keyword>
<keyword id="KW-0479">Metal-binding</keyword>
<keyword id="KW-0547">Nucleotide-binding</keyword>
<keyword id="KW-0548">Nucleotidyltransferase</keyword>
<keyword id="KW-1185">Reference proteome</keyword>
<keyword id="KW-0696">RNA-directed RNA polymerase</keyword>
<keyword id="KW-0808">Transferase</keyword>
<keyword id="KW-0693">Viral RNA replication</keyword>
<keyword id="KW-0946">Virion</keyword>
<proteinExistence type="inferred from homology"/>
<protein>
    <recommendedName>
        <fullName evidence="1">RNA-directed RNA polymerase L</fullName>
        <shortName evidence="1">Protein L</shortName>
        <ecNumber evidence="1">2.7.7.48</ecNumber>
    </recommendedName>
    <alternativeName>
        <fullName evidence="1">Large structural protein</fullName>
    </alternativeName>
    <alternativeName>
        <fullName evidence="1">Replicase</fullName>
    </alternativeName>
    <alternativeName>
        <fullName evidence="1">Transcriptase</fullName>
    </alternativeName>
    <domain>
        <recommendedName>
            <fullName evidence="1">cap-snatching endonuclease</fullName>
            <ecNumber evidence="1">3.1.-.-</ecNumber>
        </recommendedName>
    </domain>
</protein>
<evidence type="ECO:0000255" key="1">
    <source>
        <dbReference type="HAMAP-Rule" id="MF_04086"/>
    </source>
</evidence>
<gene>
    <name evidence="1" type="primary">L</name>
</gene>
<organism>
    <name type="scientific">Cupixi mammarenavirus (isolate Rat/Brasil/BeAn 119303/1970)</name>
    <name type="common">CPXV</name>
    <dbReference type="NCBI Taxonomy" id="3052304"/>
    <lineage>
        <taxon>Viruses</taxon>
        <taxon>Riboviria</taxon>
        <taxon>Orthornavirae</taxon>
        <taxon>Negarnaviricota</taxon>
        <taxon>Polyploviricotina</taxon>
        <taxon>Ellioviricetes</taxon>
        <taxon>Bunyavirales</taxon>
        <taxon>Arenaviridae</taxon>
        <taxon>Mammarenavirus</taxon>
    </lineage>
</organism>
<comment type="function">
    <text evidence="1">RNA-dependent RNA polymerase, which is responsible for the replication and transcription of the viral RNA genome using antigenomic RNA as an intermediate. During transcription, synthesizes subgenomic RNAs and assures their capping by a cap-snatching mechanism, which involves the endonuclease activity cleaving the host capped pre-mRNAs. These short capped RNAs are then used as primers for viral transcription. The 3'-end of subgenomic mRNAs molecules are heterogeneous and not polyadenylated. The replicase function is to direct synthesis of antigenomic and genomic RNA which are encapsidated and non capped. As a consequence of the use of the same enzyme for both transcription and replication, these mechanisms need to be well coordinated. These processes may be regulated by proteins N and Z in a dose-dependent manner. Z protein inhibits the viral polymerase L und thus the viral transcription and RNA synthesis.</text>
</comment>
<comment type="catalytic activity">
    <reaction evidence="1">
        <text>RNA(n) + a ribonucleoside 5'-triphosphate = RNA(n+1) + diphosphate</text>
        <dbReference type="Rhea" id="RHEA:21248"/>
        <dbReference type="Rhea" id="RHEA-COMP:14527"/>
        <dbReference type="Rhea" id="RHEA-COMP:17342"/>
        <dbReference type="ChEBI" id="CHEBI:33019"/>
        <dbReference type="ChEBI" id="CHEBI:61557"/>
        <dbReference type="ChEBI" id="CHEBI:140395"/>
        <dbReference type="EC" id="2.7.7.48"/>
    </reaction>
</comment>
<comment type="cofactor">
    <cofactor evidence="1">
        <name>Mn(2+)</name>
        <dbReference type="ChEBI" id="CHEBI:29035"/>
    </cofactor>
    <text evidence="1">For endonuclease activity. Binds 2 Mn(2+) ions in the active site. The divalent metal ions are crucial for catalytic activity.</text>
</comment>
<comment type="cofactor">
    <cofactor evidence="1">
        <name>Mg(2+)</name>
        <dbReference type="ChEBI" id="CHEBI:18420"/>
    </cofactor>
    <cofactor evidence="1">
        <name>Mn(2+)</name>
        <dbReference type="ChEBI" id="CHEBI:29035"/>
    </cofactor>
    <text evidence="1">For polymerase activity.</text>
</comment>
<comment type="subunit">
    <text evidence="1">Homomultimer; the oligomeric structure is essential for the polymerase activity. Interacts with nucleoprotein N. Interacts with protein Z; this interaction inhibits viral transcription and replication, Z partially blocks the product exit tunnel for the releasing nascent RNA product.</text>
</comment>
<comment type="subcellular location">
    <subcellularLocation>
        <location evidence="1">Virion</location>
    </subcellularLocation>
    <subcellularLocation>
        <location evidence="1">Host cytoplasm</location>
    </subcellularLocation>
</comment>
<comment type="domain">
    <text evidence="1">The N-terminus contains the endonuclease activity (endoN). The central region contains the RdRp activity.</text>
</comment>
<comment type="miscellaneous">
    <text evidence="1">Classified as His(-) endonuclease since it does not have a histidine upstream of the active site that coordinates the first cation. His(-) endonucleases display very low activity in vitro, although they are clearly active in vivo.</text>
</comment>
<comment type="similarity">
    <text evidence="1">Belongs to the Bunyavirales RNA polymerase family.</text>
</comment>
<reference key="1">
    <citation type="journal article" date="2003" name="Virology">
        <title>New insights into the evolutionary relationships between arenaviruses provided by comparative analysis of small and large segment sequences.</title>
        <authorList>
            <person name="Charrel R.N."/>
            <person name="Lemasson J.J."/>
            <person name="Garbutt M."/>
            <person name="Khelifa R."/>
            <person name="De Micco P."/>
            <person name="Feldmann H."/>
            <person name="de Lamballerie X."/>
        </authorList>
    </citation>
    <scope>NUCLEOTIDE SEQUENCE [GENOMIC RNA]</scope>
</reference>
<reference key="2">
    <citation type="submission" date="2004-05" db="EMBL/GenBank/DDBJ databases">
        <title>Complete sequence determination and analysis of the large RNA segment of arenaviruses.</title>
        <authorList>
            <person name="Emonet S."/>
            <person name="de Lamballerie X."/>
            <person name="de Micco P."/>
            <person name="Charrel R.N."/>
        </authorList>
    </citation>
    <scope>NUCLEOTIDE SEQUENCE [GENOMIC RNA]</scope>
</reference>
<reference key="3">
    <citation type="journal article" date="2017" name="Crit. Rev. Microbiol.">
        <title>Bunyaviridae RdRps: structure, motifs, and RNA synthesis machinery.</title>
        <authorList>
            <person name="Amroun A."/>
            <person name="Priet S."/>
            <person name="de Lamballerie X."/>
            <person name="Querat G."/>
        </authorList>
    </citation>
    <scope>REVIEW</scope>
</reference>
<reference key="4">
    <citation type="journal article" date="2020" name="Trends Microbiol.">
        <title>The Cap-Snatching Mechanism of Bunyaviruses.</title>
        <authorList>
            <person name="Olschewski S."/>
            <person name="Cusack S."/>
            <person name="Rosenthal M."/>
        </authorList>
    </citation>
    <scope>REVIEW</scope>
</reference>
<accession>Q6XQH2</accession>